<organism>
    <name type="scientific">Dictyostelium discoideum</name>
    <name type="common">Social amoeba</name>
    <dbReference type="NCBI Taxonomy" id="44689"/>
    <lineage>
        <taxon>Eukaryota</taxon>
        <taxon>Amoebozoa</taxon>
        <taxon>Evosea</taxon>
        <taxon>Eumycetozoa</taxon>
        <taxon>Dictyostelia</taxon>
        <taxon>Dictyosteliales</taxon>
        <taxon>Dictyosteliaceae</taxon>
        <taxon>Dictyostelium</taxon>
    </lineage>
</organism>
<comment type="function">
    <text evidence="1">Probable polyketide synthase.</text>
</comment>
<comment type="cofactor">
    <cofactor evidence="1">
        <name>pantetheine 4'-phosphate</name>
        <dbReference type="ChEBI" id="CHEBI:47942"/>
    </cofactor>
    <text evidence="1">Binds 1 phosphopantetheine covalently.</text>
</comment>
<comment type="domain">
    <text evidence="1">Modular protein that is responsible for the completion of one condensation-processing cycle. The beta-ketoacyl synthase region is responsible for the actual condensation reaction while the acyl/malonyl transferase region is responsible for incorporating carboxylic acids units onto an acyl carrier protein (ACP) domain (By similarity).</text>
</comment>
<comment type="miscellaneous">
    <text>Encoded by one of the numerous copies of polyketide synthase genes and clustered as a pair pks40/pks41 in chromosome 6.</text>
</comment>
<dbReference type="EC" id="2.3.1.-"/>
<dbReference type="EMBL" id="AAFI02000177">
    <property type="protein sequence ID" value="EAL61791.1"/>
    <property type="molecule type" value="Genomic_DNA"/>
</dbReference>
<dbReference type="RefSeq" id="XP_635303.1">
    <property type="nucleotide sequence ID" value="XM_630211.1"/>
</dbReference>
<dbReference type="SMR" id="Q54ED7"/>
<dbReference type="FunCoup" id="Q54ED7">
    <property type="interactions" value="4"/>
</dbReference>
<dbReference type="STRING" id="44689.Q54ED7"/>
<dbReference type="PaxDb" id="44689-DDB0235302"/>
<dbReference type="EnsemblProtists" id="EAL61791">
    <property type="protein sequence ID" value="EAL61791"/>
    <property type="gene ID" value="DDB_G0291614"/>
</dbReference>
<dbReference type="GeneID" id="8628247"/>
<dbReference type="KEGG" id="ddi:DDB_G0291614"/>
<dbReference type="dictyBase" id="DDB_G0291614">
    <property type="gene designation" value="pks40"/>
</dbReference>
<dbReference type="VEuPathDB" id="AmoebaDB:DDB_G0291614"/>
<dbReference type="eggNOG" id="KOG1202">
    <property type="taxonomic scope" value="Eukaryota"/>
</dbReference>
<dbReference type="HOGENOM" id="CLU_000022_31_0_1"/>
<dbReference type="InParanoid" id="Q54ED7"/>
<dbReference type="PhylomeDB" id="Q54ED7"/>
<dbReference type="PRO" id="PR:Q54ED7"/>
<dbReference type="Proteomes" id="UP000002195">
    <property type="component" value="Chromosome 6"/>
</dbReference>
<dbReference type="GO" id="GO:0004315">
    <property type="term" value="F:3-oxoacyl-[acyl-carrier-protein] synthase activity"/>
    <property type="evidence" value="ECO:0007669"/>
    <property type="project" value="InterPro"/>
</dbReference>
<dbReference type="GO" id="GO:0016491">
    <property type="term" value="F:oxidoreductase activity"/>
    <property type="evidence" value="ECO:0007669"/>
    <property type="project" value="InterPro"/>
</dbReference>
<dbReference type="GO" id="GO:0006633">
    <property type="term" value="P:fatty acid biosynthetic process"/>
    <property type="evidence" value="ECO:0000318"/>
    <property type="project" value="GO_Central"/>
</dbReference>
<dbReference type="CDD" id="cd02440">
    <property type="entry name" value="AdoMet_MTases"/>
    <property type="match status" value="1"/>
</dbReference>
<dbReference type="CDD" id="cd05195">
    <property type="entry name" value="enoyl_red"/>
    <property type="match status" value="1"/>
</dbReference>
<dbReference type="CDD" id="cd08954">
    <property type="entry name" value="KR_1_FAS_SDR_x"/>
    <property type="match status" value="1"/>
</dbReference>
<dbReference type="CDD" id="cd00833">
    <property type="entry name" value="PKS"/>
    <property type="match status" value="1"/>
</dbReference>
<dbReference type="Gene3D" id="3.40.47.10">
    <property type="match status" value="1"/>
</dbReference>
<dbReference type="Gene3D" id="1.10.1200.10">
    <property type="entry name" value="ACP-like"/>
    <property type="match status" value="1"/>
</dbReference>
<dbReference type="Gene3D" id="3.40.366.10">
    <property type="entry name" value="Malonyl-Coenzyme A Acyl Carrier Protein, domain 2"/>
    <property type="match status" value="1"/>
</dbReference>
<dbReference type="Gene3D" id="3.90.180.10">
    <property type="entry name" value="Medium-chain alcohol dehydrogenases, catalytic domain"/>
    <property type="match status" value="1"/>
</dbReference>
<dbReference type="Gene3D" id="3.40.50.720">
    <property type="entry name" value="NAD(P)-binding Rossmann-like Domain"/>
    <property type="match status" value="2"/>
</dbReference>
<dbReference type="Gene3D" id="3.10.129.110">
    <property type="entry name" value="Polyketide synthase dehydratase"/>
    <property type="match status" value="1"/>
</dbReference>
<dbReference type="Gene3D" id="3.40.50.150">
    <property type="entry name" value="Vaccinia Virus protein VP39"/>
    <property type="match status" value="1"/>
</dbReference>
<dbReference type="InterPro" id="IPR001227">
    <property type="entry name" value="Ac_transferase_dom_sf"/>
</dbReference>
<dbReference type="InterPro" id="IPR036736">
    <property type="entry name" value="ACP-like_sf"/>
</dbReference>
<dbReference type="InterPro" id="IPR014043">
    <property type="entry name" value="Acyl_transferase_dom"/>
</dbReference>
<dbReference type="InterPro" id="IPR016035">
    <property type="entry name" value="Acyl_Trfase/lysoPLipase"/>
</dbReference>
<dbReference type="InterPro" id="IPR013154">
    <property type="entry name" value="ADH-like_N"/>
</dbReference>
<dbReference type="InterPro" id="IPR011032">
    <property type="entry name" value="GroES-like_sf"/>
</dbReference>
<dbReference type="InterPro" id="IPR018201">
    <property type="entry name" value="Ketoacyl_synth_AS"/>
</dbReference>
<dbReference type="InterPro" id="IPR014031">
    <property type="entry name" value="Ketoacyl_synth_C"/>
</dbReference>
<dbReference type="InterPro" id="IPR014030">
    <property type="entry name" value="Ketoacyl_synth_N"/>
</dbReference>
<dbReference type="InterPro" id="IPR016036">
    <property type="entry name" value="Malonyl_transacylase_ACP-bd"/>
</dbReference>
<dbReference type="InterPro" id="IPR013217">
    <property type="entry name" value="Methyltransf_12"/>
</dbReference>
<dbReference type="InterPro" id="IPR036291">
    <property type="entry name" value="NAD(P)-bd_dom_sf"/>
</dbReference>
<dbReference type="InterPro" id="IPR032821">
    <property type="entry name" value="PKS_assoc"/>
</dbReference>
<dbReference type="InterPro" id="IPR020841">
    <property type="entry name" value="PKS_Beta-ketoAc_synthase_dom"/>
</dbReference>
<dbReference type="InterPro" id="IPR042104">
    <property type="entry name" value="PKS_dehydratase_sf"/>
</dbReference>
<dbReference type="InterPro" id="IPR049551">
    <property type="entry name" value="PKS_DH_C"/>
</dbReference>
<dbReference type="InterPro" id="IPR020843">
    <property type="entry name" value="PKS_ER"/>
</dbReference>
<dbReference type="InterPro" id="IPR013968">
    <property type="entry name" value="PKS_KR"/>
</dbReference>
<dbReference type="InterPro" id="IPR049900">
    <property type="entry name" value="PKS_mFAS_DH"/>
</dbReference>
<dbReference type="InterPro" id="IPR050444">
    <property type="entry name" value="Polyketide_Synthase"/>
</dbReference>
<dbReference type="InterPro" id="IPR009081">
    <property type="entry name" value="PP-bd_ACP"/>
</dbReference>
<dbReference type="InterPro" id="IPR029063">
    <property type="entry name" value="SAM-dependent_MTases_sf"/>
</dbReference>
<dbReference type="InterPro" id="IPR016039">
    <property type="entry name" value="Thiolase-like"/>
</dbReference>
<dbReference type="PANTHER" id="PTHR45681:SF4">
    <property type="entry name" value="BETA-KETOACYL SYNTHASE FAMILY PROTEIN-RELATED"/>
    <property type="match status" value="1"/>
</dbReference>
<dbReference type="PANTHER" id="PTHR45681">
    <property type="entry name" value="POLYKETIDE SYNTHASE 44-RELATED"/>
    <property type="match status" value="1"/>
</dbReference>
<dbReference type="Pfam" id="PF23297">
    <property type="entry name" value="ACP_SdgA_C"/>
    <property type="match status" value="1"/>
</dbReference>
<dbReference type="Pfam" id="PF00698">
    <property type="entry name" value="Acyl_transf_1"/>
    <property type="match status" value="1"/>
</dbReference>
<dbReference type="Pfam" id="PF08240">
    <property type="entry name" value="ADH_N"/>
    <property type="match status" value="1"/>
</dbReference>
<dbReference type="Pfam" id="PF16197">
    <property type="entry name" value="KAsynt_C_assoc"/>
    <property type="match status" value="1"/>
</dbReference>
<dbReference type="Pfam" id="PF00109">
    <property type="entry name" value="ketoacyl-synt"/>
    <property type="match status" value="1"/>
</dbReference>
<dbReference type="Pfam" id="PF02801">
    <property type="entry name" value="Ketoacyl-synt_C"/>
    <property type="match status" value="1"/>
</dbReference>
<dbReference type="Pfam" id="PF08659">
    <property type="entry name" value="KR"/>
    <property type="match status" value="1"/>
</dbReference>
<dbReference type="Pfam" id="PF08242">
    <property type="entry name" value="Methyltransf_12"/>
    <property type="match status" value="1"/>
</dbReference>
<dbReference type="Pfam" id="PF14765">
    <property type="entry name" value="PS-DH"/>
    <property type="match status" value="1"/>
</dbReference>
<dbReference type="SMART" id="SM00827">
    <property type="entry name" value="PKS_AT"/>
    <property type="match status" value="1"/>
</dbReference>
<dbReference type="SMART" id="SM00829">
    <property type="entry name" value="PKS_ER"/>
    <property type="match status" value="1"/>
</dbReference>
<dbReference type="SMART" id="SM00825">
    <property type="entry name" value="PKS_KS"/>
    <property type="match status" value="1"/>
</dbReference>
<dbReference type="SUPFAM" id="SSF47336">
    <property type="entry name" value="ACP-like"/>
    <property type="match status" value="1"/>
</dbReference>
<dbReference type="SUPFAM" id="SSF52151">
    <property type="entry name" value="FabD/lysophospholipase-like"/>
    <property type="match status" value="1"/>
</dbReference>
<dbReference type="SUPFAM" id="SSF50129">
    <property type="entry name" value="GroES-like"/>
    <property type="match status" value="1"/>
</dbReference>
<dbReference type="SUPFAM" id="SSF51735">
    <property type="entry name" value="NAD(P)-binding Rossmann-fold domains"/>
    <property type="match status" value="2"/>
</dbReference>
<dbReference type="SUPFAM" id="SSF55048">
    <property type="entry name" value="Probable ACP-binding domain of malonyl-CoA ACP transacylase"/>
    <property type="match status" value="1"/>
</dbReference>
<dbReference type="SUPFAM" id="SSF53335">
    <property type="entry name" value="S-adenosyl-L-methionine-dependent methyltransferases"/>
    <property type="match status" value="1"/>
</dbReference>
<dbReference type="SUPFAM" id="SSF53901">
    <property type="entry name" value="Thiolase-like"/>
    <property type="match status" value="1"/>
</dbReference>
<dbReference type="PROSITE" id="PS50075">
    <property type="entry name" value="CARRIER"/>
    <property type="match status" value="1"/>
</dbReference>
<dbReference type="PROSITE" id="PS00606">
    <property type="entry name" value="KS3_1"/>
    <property type="match status" value="1"/>
</dbReference>
<dbReference type="PROSITE" id="PS52004">
    <property type="entry name" value="KS3_2"/>
    <property type="match status" value="1"/>
</dbReference>
<dbReference type="PROSITE" id="PS52019">
    <property type="entry name" value="PKS_MFAS_DH"/>
    <property type="match status" value="1"/>
</dbReference>
<reference key="1">
    <citation type="journal article" date="2005" name="Nature">
        <title>The genome of the social amoeba Dictyostelium discoideum.</title>
        <authorList>
            <person name="Eichinger L."/>
            <person name="Pachebat J.A."/>
            <person name="Gloeckner G."/>
            <person name="Rajandream M.A."/>
            <person name="Sucgang R."/>
            <person name="Berriman M."/>
            <person name="Song J."/>
            <person name="Olsen R."/>
            <person name="Szafranski K."/>
            <person name="Xu Q."/>
            <person name="Tunggal B."/>
            <person name="Kummerfeld S."/>
            <person name="Madera M."/>
            <person name="Konfortov B.A."/>
            <person name="Rivero F."/>
            <person name="Bankier A.T."/>
            <person name="Lehmann R."/>
            <person name="Hamlin N."/>
            <person name="Davies R."/>
            <person name="Gaudet P."/>
            <person name="Fey P."/>
            <person name="Pilcher K."/>
            <person name="Chen G."/>
            <person name="Saunders D."/>
            <person name="Sodergren E.J."/>
            <person name="Davis P."/>
            <person name="Kerhornou A."/>
            <person name="Nie X."/>
            <person name="Hall N."/>
            <person name="Anjard C."/>
            <person name="Hemphill L."/>
            <person name="Bason N."/>
            <person name="Farbrother P."/>
            <person name="Desany B."/>
            <person name="Just E."/>
            <person name="Morio T."/>
            <person name="Rost R."/>
            <person name="Churcher C.M."/>
            <person name="Cooper J."/>
            <person name="Haydock S."/>
            <person name="van Driessche N."/>
            <person name="Cronin A."/>
            <person name="Goodhead I."/>
            <person name="Muzny D.M."/>
            <person name="Mourier T."/>
            <person name="Pain A."/>
            <person name="Lu M."/>
            <person name="Harper D."/>
            <person name="Lindsay R."/>
            <person name="Hauser H."/>
            <person name="James K.D."/>
            <person name="Quiles M."/>
            <person name="Madan Babu M."/>
            <person name="Saito T."/>
            <person name="Buchrieser C."/>
            <person name="Wardroper A."/>
            <person name="Felder M."/>
            <person name="Thangavelu M."/>
            <person name="Johnson D."/>
            <person name="Knights A."/>
            <person name="Loulseged H."/>
            <person name="Mungall K.L."/>
            <person name="Oliver K."/>
            <person name="Price C."/>
            <person name="Quail M.A."/>
            <person name="Urushihara H."/>
            <person name="Hernandez J."/>
            <person name="Rabbinowitsch E."/>
            <person name="Steffen D."/>
            <person name="Sanders M."/>
            <person name="Ma J."/>
            <person name="Kohara Y."/>
            <person name="Sharp S."/>
            <person name="Simmonds M.N."/>
            <person name="Spiegler S."/>
            <person name="Tivey A."/>
            <person name="Sugano S."/>
            <person name="White B."/>
            <person name="Walker D."/>
            <person name="Woodward J.R."/>
            <person name="Winckler T."/>
            <person name="Tanaka Y."/>
            <person name="Shaulsky G."/>
            <person name="Schleicher M."/>
            <person name="Weinstock G.M."/>
            <person name="Rosenthal A."/>
            <person name="Cox E.C."/>
            <person name="Chisholm R.L."/>
            <person name="Gibbs R.A."/>
            <person name="Loomis W.F."/>
            <person name="Platzer M."/>
            <person name="Kay R.R."/>
            <person name="Williams J.G."/>
            <person name="Dear P.H."/>
            <person name="Noegel A.A."/>
            <person name="Barrell B.G."/>
            <person name="Kuspa A."/>
        </authorList>
    </citation>
    <scope>NUCLEOTIDE SEQUENCE [LARGE SCALE GENOMIC DNA]</scope>
    <source>
        <strain>AX4</strain>
    </source>
</reference>
<reference key="2">
    <citation type="journal article" date="2007" name="Bioinformatics">
        <title>Polyketide synthase genes and the natural products potential of Dictyostelium discoideum.</title>
        <authorList>
            <person name="Zucko J."/>
            <person name="Skunca N."/>
            <person name="Curk T."/>
            <person name="Zupan B."/>
            <person name="Long P.F."/>
            <person name="Cullum J."/>
            <person name="Kessin R.H."/>
            <person name="Hranueli D."/>
        </authorList>
    </citation>
    <scope>IDENTIFICATION</scope>
</reference>
<keyword id="KW-0596">Phosphopantetheine</keyword>
<keyword id="KW-0597">Phosphoprotein</keyword>
<keyword id="KW-1185">Reference proteome</keyword>
<keyword id="KW-0808">Transferase</keyword>
<accession>Q54ED7</accession>
<protein>
    <recommendedName>
        <fullName>Probable polyketide synthase 40</fullName>
        <shortName>dipks40</shortName>
        <ecNumber>2.3.1.-</ecNumber>
    </recommendedName>
</protein>
<sequence length="2552" mass="289094">MDYKNKYQSNENCNKVAIIGIGFRFPNLKGDLTPNGLWSQLLNKYDGIVKNDRWNESFYKTGDIPTKYAGLIPFEELKSFDPLFFGINPSEVIHMCPQQRILLKCTWEALEDSGIDPIEIRDSNTSVFLGCSNFDYQNLNKNNNKIQQNIFASSSHSVSNRISYCFDLHGESMTIDTACSSSSNAIRRGYKSIIDGSSNISVVGGINILLDPNTSKSYSQLNMLGKDGKCKTFDADADGYVRSESAGIAILKNLNDAIKDGNNIYCVIDGSASNVDGNGFSDKSNFYSPSKSSQVECIRLALESTNGGVNENDIVYFEAHGTGTPTGDPIELESVSIALKTSENRSSNNPLLIGSFKPNIGHSECASGISSLIKCCLILKNQCFVPNINYNKPNPNIKFNQWNLKVVTDPIDFSTLKLSNKPISIAINNFGVTGSNCCLIVSSFKGNQTNNNNNKSKSPKQYLIPFSTNSIKSLDLYKSRIDNNVEFKEFAENQIKSKSKKLIQRSVAIASNWDEFNLKSNTINTSNDKLTSNMLVSSNKKNATMVFVFCGQGAQYSTMAKNLYDNEPIFKKSMDKIDSKLSEYYGFSILEKLRSFNENDLKGIQYSIIAQPSTCMVQISLFELYCHWGIKPSIIVGHSLGEISSSYCSGMIDLDTFCYLIYHRSMVQSKTNGLGRMLSISIGENEYNSKYSSRYPELEIACYNSPSSIVIAGKELILNEIIKELKQDGVFCTILGSPTSFHTSSQIPVKDEILKISFKSKQSTYPIFSTVTTNLYDEMNPFDTKYVYDNIINPVRFTNTISNIYKHIELNYSVNNNSNEIIFIEIAPHPTLSFYLKQMVPEDKKQSVSIFSPLSKKKSNDLFEIQKLISELYCLGYNGIGFNIQLSNLNENDNIQTSLSLPLYQWEEQEYWKLDSLYQHHLSNGPSINHLGISNSNHTPYIKSYQTHIDIQKKPFQWLKGHQIKGKYYFPGCGYIDNILKIFGDNSESTTNPNKELPDILISFIEFKTPLIFMDGVNQCLQTNIHSTGKKEYKALFHFKDEKSSSDWVQTSTANFQLFSRGQGLNEDDEESLFKYNINDLISNQCNLTKLSKQELYSHIKTKCGLNYSGDFQRVEKCYFGNNCSLSELSLSQGVNENRSTFFDSSIIDCCLHGSIGLIDENCQLVFEKLEGLTYYSSKVPTTTSQHSKIYVYSKLKPRIGDSYSASIIVMLENGTVLFEMENASFKSTTKIKDSLAMEYPTNEIYSCYLQSKDSLIPSLSSFDHIFKRKITDEYVDQIKIYESFIPKLLFSNINKRCPEITIAEIQSSEIEQLLLKYYKIKEDNDNKWLSRLFTFAFESIKQWYHNEDYDFENVLSPHNFKIFSKSTKIISKLLFPLENDNDEDSPQSLFEGGLLDKFYSSGFSAQNELVGEIIQESIKPILNEKLVFRILEFGGGVGSLSLLVLEKINSLLIQYPNYQIDIEYTWSDISPSFITEAKAKFEKFNDRVNIIYKALNLEQPLIGEKQGLKPQYFDYIIMFNVLHVIKDVKYGVEQIYQLLVPNGHLLFIEPIYKSIVGDGIFGVFDQWWSFQDTEIRKDRCCMNQQTWYKLLKSVNFNDDIKMTPELTCFVIQAQKPSISNLSFSKSETTNYNNIIVFGNKDDSNLSNNFIKSIDNGNLQFISTIEEFNKMTKYISNESIIYFIKSIDELSVDNFVNITHEYTQINQKLMELNSKCKHVLITNDSTTTNYLSSSLIGAARYYHECPLELFILNFDTPSIIENQNLFKTIEPLINSSINIQREFIINNHKVYYERIKNETKLKSIFKNSSSFESLEQVDNFMISLTPNLEYKVKVKPTSILKENEVEIKVMSTGLNYKDYLIYAGLVESVEPIFGIEFSGIITNIGSGNKEFKVGDSVYGTGKSTTSSHIITDIDVISHKPSNISHSEASSIPVVYLTSYHSLYNIGALKNNETILIHSATGGVGLSTLEILKWKGHSGLIFVTVGSNEKEEYLRENYGDMISGIYSTRNKNFVKQIKSKISKLNPFGKSGVDFILNTLSSSDYMDSNFKCLNMSGRIVDLSITHLNSNEFTDNKKFKYNYGYHNIELQYVDKKIIKSTLSIISNAVSSNDLQLIPITEYSIENVKDSIEFINERVHMGKIVVDHENQDSIINELIEKQKSIDKFDQSIFKQNYKLEPSLLGKNILITGQSGIVLEILKWILRNSENNSIDNIIILSKSSIKWEMELLINKTKLLNSNSINSMGNYLNKIKFHFKSVDISDSGLTDKGIHELLIENPDINNIDSIFHFAYTQATCNSDEVDLHHLTQSHSAKSMGAINLHNQSIKRNWKIINFIMSSSITSKTSSANQCGYISSNNVLDALSKYRISIGLPTICTNYGLIQSTGFVSRNESVAALLSGEGLLPISTNLILGTLDLQLQNQAQSSNLILSNFNFTSLNGLPQKSLISKFDYQININEENEKSKSLLKDDNVELTVDQLITFKISELLSTDILKLNKDIILVDYGVDSLVIIQLKNWVDKEFSIPNALTIQQVQNSTINSFIQLVKNSIDKKNKK</sequence>
<evidence type="ECO:0000250" key="1"/>
<evidence type="ECO:0000255" key="2">
    <source>
        <dbReference type="PROSITE-ProRule" id="PRU00258"/>
    </source>
</evidence>
<evidence type="ECO:0000255" key="3">
    <source>
        <dbReference type="PROSITE-ProRule" id="PRU01348"/>
    </source>
</evidence>
<evidence type="ECO:0000255" key="4">
    <source>
        <dbReference type="PROSITE-ProRule" id="PRU01363"/>
    </source>
</evidence>
<evidence type="ECO:0000255" key="5">
    <source>
        <dbReference type="PROSITE-ProRule" id="PRU10022"/>
    </source>
</evidence>
<feature type="chain" id="PRO_0000371397" description="Probable polyketide synthase 40">
    <location>
        <begin position="1"/>
        <end position="2552"/>
    </location>
</feature>
<feature type="domain" description="Ketosynthase family 3 (KS3)" evidence="3">
    <location>
        <begin position="13"/>
        <end position="443"/>
    </location>
</feature>
<feature type="domain" description="PKS/mFAS DH" evidence="4">
    <location>
        <begin position="928"/>
        <end position="1235"/>
    </location>
</feature>
<feature type="domain" description="Carrier" evidence="2">
    <location>
        <begin position="2467"/>
        <end position="2546"/>
    </location>
</feature>
<feature type="region of interest" description="Acyl/malonyl transferase">
    <location>
        <begin position="629"/>
        <end position="662"/>
    </location>
</feature>
<feature type="region of interest" description="N-terminal hotdog fold" evidence="4">
    <location>
        <begin position="928"/>
        <end position="1063"/>
    </location>
</feature>
<feature type="region of interest" description="C-terminal hotdog fold" evidence="4">
    <location>
        <begin position="1087"/>
        <end position="1235"/>
    </location>
</feature>
<feature type="active site" description="For beta-ketoacyl synthase activity" evidence="3">
    <location>
        <position position="179"/>
    </location>
</feature>
<feature type="active site" description="For beta-ketoacyl synthase activity" evidence="3">
    <location>
        <position position="320"/>
    </location>
</feature>
<feature type="active site" description="For beta-ketoacyl synthase activity" evidence="3">
    <location>
        <position position="362"/>
    </location>
</feature>
<feature type="active site" description="For acyl/malonyl transferase activity" evidence="5">
    <location>
        <position position="639"/>
    </location>
</feature>
<feature type="active site" description="Proton acceptor; for dehydratase activity" evidence="4">
    <location>
        <position position="962"/>
    </location>
</feature>
<feature type="active site" description="Proton donor; for dehydratase activity" evidence="4">
    <location>
        <position position="1149"/>
    </location>
</feature>
<feature type="modified residue" description="O-(pantetheine 4'-phosphoryl)serine" evidence="2">
    <location>
        <position position="2505"/>
    </location>
</feature>
<gene>
    <name type="primary">pks40</name>
    <name type="ORF">DDB_G0291614</name>
</gene>
<name>PKS40_DICDI</name>
<proteinExistence type="inferred from homology"/>